<sequence length="243" mass="26511">IVGGKTAKFGDYPWMVSIQQKNKKGTFDHICGGAIINVNWILTAAHCFDQPIVKSDYRAYVGLRSILHTKENTVQRLELSKIVLHPGYKPKKDPDDIALIKVAKPIVIGNYANGICVPKGVTNPEGNATVIGWGKISSGGKQVNTLQEVTIPIIPWKKCKEIYGDEFSEFEYSQITPYMICAGAEGKDSCQADSGGPLFQIDANGVATLIGTVANGADCGYKHYPGVYMKVSSYTNWMSKNMV</sequence>
<evidence type="ECO:0000250" key="1"/>
<evidence type="ECO:0000255" key="2">
    <source>
        <dbReference type="PROSITE-ProRule" id="PRU00274"/>
    </source>
</evidence>
<evidence type="ECO:0000269" key="3">
    <source>
    </source>
</evidence>
<name>ISOHC_AGEAP</name>
<protein>
    <recommendedName>
        <fullName>Venom peptide isomerase heavy chain</fullName>
        <ecNumber>5.-.-.-</ecNumber>
    </recommendedName>
</protein>
<feature type="chain" id="PRO_0000404523" description="Venom peptide isomerase heavy chain">
    <location>
        <begin position="1"/>
        <end position="243"/>
    </location>
</feature>
<feature type="domain" description="Peptidase S1" evidence="2">
    <location>
        <begin position="1"/>
        <end position="243"/>
    </location>
</feature>
<feature type="active site" description="Charge relay system" evidence="1">
    <location>
        <position position="46"/>
    </location>
</feature>
<feature type="active site" description="Charge relay system" evidence="1">
    <location>
        <position position="96"/>
    </location>
</feature>
<feature type="active site" description="Charge relay system" evidence="1">
    <location>
        <position position="194"/>
    </location>
</feature>
<feature type="glycosylation site" description="N-linked (GlcNAc...) asparagine" evidence="3">
    <location>
        <position position="127"/>
    </location>
</feature>
<feature type="disulfide bond" evidence="2 3">
    <location>
        <begin position="31"/>
        <end position="47"/>
    </location>
</feature>
<feature type="disulfide bond" description="Interchain (with C-9 in venom peptide isomerase light chain)" evidence="2 3">
    <location>
        <position position="116"/>
    </location>
</feature>
<feature type="disulfide bond" evidence="2 3">
    <location>
        <begin position="159"/>
        <end position="181"/>
    </location>
</feature>
<feature type="disulfide bond" evidence="2 3">
    <location>
        <begin position="190"/>
        <end position="219"/>
    </location>
</feature>
<proteinExistence type="evidence at protein level"/>
<reference key="1">
    <citation type="journal article" date="1995" name="J. Biol. Chem.">
        <title>Isolation and characterization of a peptide isomerase from funnel web spider venom.</title>
        <authorList>
            <person name="Shikata Y."/>
            <person name="Watanabe T."/>
            <person name="Teramoto T."/>
            <person name="Inoue A."/>
            <person name="Kawakami Y."/>
            <person name="Nishizawa Y."/>
            <person name="Katayama K."/>
            <person name="Kuwada M."/>
        </authorList>
    </citation>
    <scope>PROTEIN SEQUENCE</scope>
    <scope>FUNCTION</scope>
    <scope>SUBUNIT</scope>
    <scope>SUBCELLULAR LOCATION</scope>
    <scope>TISSUE SPECIFICITY</scope>
    <scope>GLYCOSYLATION AT ASN-127</scope>
    <scope>DISULFIDE BOND</scope>
    <source>
        <tissue>Venom</tissue>
    </source>
</reference>
<organism>
    <name type="scientific">Agelenopsis aperta</name>
    <name type="common">North American funnel-web spider</name>
    <name type="synonym">Agelenopsis gertschi</name>
    <dbReference type="NCBI Taxonomy" id="6908"/>
    <lineage>
        <taxon>Eukaryota</taxon>
        <taxon>Metazoa</taxon>
        <taxon>Ecdysozoa</taxon>
        <taxon>Arthropoda</taxon>
        <taxon>Chelicerata</taxon>
        <taxon>Arachnida</taxon>
        <taxon>Araneae</taxon>
        <taxon>Araneomorphae</taxon>
        <taxon>Entelegynae</taxon>
        <taxon>Agelenidae</taxon>
        <taxon>Agelenopsis</taxon>
    </lineage>
</organism>
<dbReference type="EC" id="5.-.-.-"/>
<dbReference type="SMR" id="Q9TXD8"/>
<dbReference type="iPTMnet" id="Q9TXD8"/>
<dbReference type="GO" id="GO:0005576">
    <property type="term" value="C:extracellular region"/>
    <property type="evidence" value="ECO:0007669"/>
    <property type="project" value="UniProtKB-SubCell"/>
</dbReference>
<dbReference type="GO" id="GO:0016853">
    <property type="term" value="F:isomerase activity"/>
    <property type="evidence" value="ECO:0007669"/>
    <property type="project" value="UniProtKB-KW"/>
</dbReference>
<dbReference type="GO" id="GO:0004252">
    <property type="term" value="F:serine-type endopeptidase activity"/>
    <property type="evidence" value="ECO:0007669"/>
    <property type="project" value="InterPro"/>
</dbReference>
<dbReference type="GO" id="GO:0006508">
    <property type="term" value="P:proteolysis"/>
    <property type="evidence" value="ECO:0007669"/>
    <property type="project" value="InterPro"/>
</dbReference>
<dbReference type="CDD" id="cd00190">
    <property type="entry name" value="Tryp_SPc"/>
    <property type="match status" value="1"/>
</dbReference>
<dbReference type="FunFam" id="2.40.10.10:FF:000047">
    <property type="entry name" value="Trypsin eta"/>
    <property type="match status" value="1"/>
</dbReference>
<dbReference type="Gene3D" id="2.40.10.10">
    <property type="entry name" value="Trypsin-like serine proteases"/>
    <property type="match status" value="1"/>
</dbReference>
<dbReference type="InterPro" id="IPR009003">
    <property type="entry name" value="Peptidase_S1_PA"/>
</dbReference>
<dbReference type="InterPro" id="IPR043504">
    <property type="entry name" value="Peptidase_S1_PA_chymotrypsin"/>
</dbReference>
<dbReference type="InterPro" id="IPR001314">
    <property type="entry name" value="Peptidase_S1A"/>
</dbReference>
<dbReference type="InterPro" id="IPR001254">
    <property type="entry name" value="Trypsin_dom"/>
</dbReference>
<dbReference type="InterPro" id="IPR018114">
    <property type="entry name" value="TRYPSIN_HIS"/>
</dbReference>
<dbReference type="PANTHER" id="PTHR24253:SF176">
    <property type="entry name" value="CORIN, ISOFORM B"/>
    <property type="match status" value="1"/>
</dbReference>
<dbReference type="PANTHER" id="PTHR24253">
    <property type="entry name" value="TRANSMEMBRANE PROTEASE SERINE"/>
    <property type="match status" value="1"/>
</dbReference>
<dbReference type="Pfam" id="PF00089">
    <property type="entry name" value="Trypsin"/>
    <property type="match status" value="1"/>
</dbReference>
<dbReference type="PRINTS" id="PR00722">
    <property type="entry name" value="CHYMOTRYPSIN"/>
</dbReference>
<dbReference type="SMART" id="SM00020">
    <property type="entry name" value="Tryp_SPc"/>
    <property type="match status" value="1"/>
</dbReference>
<dbReference type="SUPFAM" id="SSF50494">
    <property type="entry name" value="Trypsin-like serine proteases"/>
    <property type="match status" value="1"/>
</dbReference>
<dbReference type="PROSITE" id="PS50240">
    <property type="entry name" value="TRYPSIN_DOM"/>
    <property type="match status" value="1"/>
</dbReference>
<dbReference type="PROSITE" id="PS00134">
    <property type="entry name" value="TRYPSIN_HIS"/>
    <property type="match status" value="1"/>
</dbReference>
<accession>Q9TXD8</accession>
<keyword id="KW-0903">Direct protein sequencing</keyword>
<keyword id="KW-1015">Disulfide bond</keyword>
<keyword id="KW-0325">Glycoprotein</keyword>
<keyword id="KW-0413">Isomerase</keyword>
<keyword id="KW-0964">Secreted</keyword>
<comment type="function">
    <text evidence="3">Peptide isomerase that inverts the chirality at the Ser-81 of omega-Aga IVB. Acts cofactor-independently.</text>
</comment>
<comment type="subunit">
    <text evidence="3">Heterodimer with venom peptide isomerase light chain; disulfide-linked.</text>
</comment>
<comment type="subcellular location">
    <subcellularLocation>
        <location evidence="3">Secreted</location>
    </subcellularLocation>
</comment>
<comment type="tissue specificity">
    <text evidence="3">Expressed by the venom gland.</text>
</comment>
<comment type="PTM">
    <text evidence="3">N-linked glycan at Asn-127 consists of Man3-GlcNAc2-Fuc.</text>
</comment>
<comment type="similarity">
    <text evidence="2">Belongs to the peptidase S1 family.</text>
</comment>